<sequence length="530" mass="60070">MSLLNCENSCGSSQSSSDCCAAMAASCSAAVKDDSVSGSASTGNLSSSFMEEIQGYDVEFDPPLESKYECPICLMALREAVQTPCGHRFCKACIIKSIRDAGHKCPVDNEILLENQLFPDNFAKREILSLTVKCPNKGCLQKMELRHLEDHQVHCEFALVNCPQCQRPFQKCQVNTHIIEDCPRRQVSCVNCAVSMAYEEKEIHDQSCPLANIICEYCGTILIREQMPNHYDLDCPTAPIPCTFSVFGCHEKMQRNHLARHLQENTQLHMRLLAQAVHNVNLALRPCDAASPSRGCRPEDPNYEETIKQLESRLVRQDHQIRELTAKMETQSMYVGELKRTIRTLEDKVAEMEAQQCNGIYIWKIGNFGMHLKSQEEERPVVIHSPGFYTGRPGYKLCMRLHLQLPTAQRCANYISLFVHTMQGEYDSHLPWPFQGTIRLTILDQSEALIRQNHEEVMDAKPELLAFQRPTIPRNPKGFGYVTFMHLEALRQGTFIKDDTLLVRCEVSTRFDMGGLRKEGFQPRSTDAGV</sequence>
<gene>
    <name type="primary">Traf6</name>
</gene>
<protein>
    <recommendedName>
        <fullName>TNF receptor-associated factor 6</fullName>
        <ecNumber>2.3.2.27</ecNumber>
    </recommendedName>
    <alternativeName>
        <fullName>E3 ubiquitin-protein ligase TRAF6</fullName>
    </alternativeName>
    <alternativeName>
        <fullName evidence="28">RING-type E3 ubiquitin transferase TRAF6</fullName>
    </alternativeName>
</protein>
<reference key="1">
    <citation type="journal article" date="1996" name="J. Biol. Chem.">
        <title>Identification of TRAF6, a novel tumor necrosis factor receptor-associated factor protein that mediates signaling from an amino-terminal domain of the CD40 cytoplasmic region.</title>
        <authorList>
            <person name="Ishida T."/>
            <person name="Mizushima S."/>
            <person name="Azuma S."/>
            <person name="Kobayashi N."/>
            <person name="Tojo T."/>
            <person name="Suzuki K."/>
            <person name="Aizawa S."/>
            <person name="Watanabe T."/>
            <person name="Mosialos G."/>
            <person name="Kieff E."/>
            <person name="Yamamoto T."/>
            <person name="Inoue J."/>
        </authorList>
    </citation>
    <scope>NUCLEOTIDE SEQUENCE [MRNA] (ISOFORM 1)</scope>
    <source>
        <strain>C57BL/Kaplan</strain>
        <tissue>T-cell lymphoma</tissue>
    </source>
</reference>
<reference key="2">
    <citation type="journal article" date="2005" name="Science">
        <title>The transcriptional landscape of the mammalian genome.</title>
        <authorList>
            <person name="Carninci P."/>
            <person name="Kasukawa T."/>
            <person name="Katayama S."/>
            <person name="Gough J."/>
            <person name="Frith M.C."/>
            <person name="Maeda N."/>
            <person name="Oyama R."/>
            <person name="Ravasi T."/>
            <person name="Lenhard B."/>
            <person name="Wells C."/>
            <person name="Kodzius R."/>
            <person name="Shimokawa K."/>
            <person name="Bajic V.B."/>
            <person name="Brenner S.E."/>
            <person name="Batalov S."/>
            <person name="Forrest A.R."/>
            <person name="Zavolan M."/>
            <person name="Davis M.J."/>
            <person name="Wilming L.G."/>
            <person name="Aidinis V."/>
            <person name="Allen J.E."/>
            <person name="Ambesi-Impiombato A."/>
            <person name="Apweiler R."/>
            <person name="Aturaliya R.N."/>
            <person name="Bailey T.L."/>
            <person name="Bansal M."/>
            <person name="Baxter L."/>
            <person name="Beisel K.W."/>
            <person name="Bersano T."/>
            <person name="Bono H."/>
            <person name="Chalk A.M."/>
            <person name="Chiu K.P."/>
            <person name="Choudhary V."/>
            <person name="Christoffels A."/>
            <person name="Clutterbuck D.R."/>
            <person name="Crowe M.L."/>
            <person name="Dalla E."/>
            <person name="Dalrymple B.P."/>
            <person name="de Bono B."/>
            <person name="Della Gatta G."/>
            <person name="di Bernardo D."/>
            <person name="Down T."/>
            <person name="Engstrom P."/>
            <person name="Fagiolini M."/>
            <person name="Faulkner G."/>
            <person name="Fletcher C.F."/>
            <person name="Fukushima T."/>
            <person name="Furuno M."/>
            <person name="Futaki S."/>
            <person name="Gariboldi M."/>
            <person name="Georgii-Hemming P."/>
            <person name="Gingeras T.R."/>
            <person name="Gojobori T."/>
            <person name="Green R.E."/>
            <person name="Gustincich S."/>
            <person name="Harbers M."/>
            <person name="Hayashi Y."/>
            <person name="Hensch T.K."/>
            <person name="Hirokawa N."/>
            <person name="Hill D."/>
            <person name="Huminiecki L."/>
            <person name="Iacono M."/>
            <person name="Ikeo K."/>
            <person name="Iwama A."/>
            <person name="Ishikawa T."/>
            <person name="Jakt M."/>
            <person name="Kanapin A."/>
            <person name="Katoh M."/>
            <person name="Kawasawa Y."/>
            <person name="Kelso J."/>
            <person name="Kitamura H."/>
            <person name="Kitano H."/>
            <person name="Kollias G."/>
            <person name="Krishnan S.P."/>
            <person name="Kruger A."/>
            <person name="Kummerfeld S.K."/>
            <person name="Kurochkin I.V."/>
            <person name="Lareau L.F."/>
            <person name="Lazarevic D."/>
            <person name="Lipovich L."/>
            <person name="Liu J."/>
            <person name="Liuni S."/>
            <person name="McWilliam S."/>
            <person name="Madan Babu M."/>
            <person name="Madera M."/>
            <person name="Marchionni L."/>
            <person name="Matsuda H."/>
            <person name="Matsuzawa S."/>
            <person name="Miki H."/>
            <person name="Mignone F."/>
            <person name="Miyake S."/>
            <person name="Morris K."/>
            <person name="Mottagui-Tabar S."/>
            <person name="Mulder N."/>
            <person name="Nakano N."/>
            <person name="Nakauchi H."/>
            <person name="Ng P."/>
            <person name="Nilsson R."/>
            <person name="Nishiguchi S."/>
            <person name="Nishikawa S."/>
            <person name="Nori F."/>
            <person name="Ohara O."/>
            <person name="Okazaki Y."/>
            <person name="Orlando V."/>
            <person name="Pang K.C."/>
            <person name="Pavan W.J."/>
            <person name="Pavesi G."/>
            <person name="Pesole G."/>
            <person name="Petrovsky N."/>
            <person name="Piazza S."/>
            <person name="Reed J."/>
            <person name="Reid J.F."/>
            <person name="Ring B.Z."/>
            <person name="Ringwald M."/>
            <person name="Rost B."/>
            <person name="Ruan Y."/>
            <person name="Salzberg S.L."/>
            <person name="Sandelin A."/>
            <person name="Schneider C."/>
            <person name="Schoenbach C."/>
            <person name="Sekiguchi K."/>
            <person name="Semple C.A."/>
            <person name="Seno S."/>
            <person name="Sessa L."/>
            <person name="Sheng Y."/>
            <person name="Shibata Y."/>
            <person name="Shimada H."/>
            <person name="Shimada K."/>
            <person name="Silva D."/>
            <person name="Sinclair B."/>
            <person name="Sperling S."/>
            <person name="Stupka E."/>
            <person name="Sugiura K."/>
            <person name="Sultana R."/>
            <person name="Takenaka Y."/>
            <person name="Taki K."/>
            <person name="Tammoja K."/>
            <person name="Tan S.L."/>
            <person name="Tang S."/>
            <person name="Taylor M.S."/>
            <person name="Tegner J."/>
            <person name="Teichmann S.A."/>
            <person name="Ueda H.R."/>
            <person name="van Nimwegen E."/>
            <person name="Verardo R."/>
            <person name="Wei C.L."/>
            <person name="Yagi K."/>
            <person name="Yamanishi H."/>
            <person name="Zabarovsky E."/>
            <person name="Zhu S."/>
            <person name="Zimmer A."/>
            <person name="Hide W."/>
            <person name="Bult C."/>
            <person name="Grimmond S.M."/>
            <person name="Teasdale R.D."/>
            <person name="Liu E.T."/>
            <person name="Brusic V."/>
            <person name="Quackenbush J."/>
            <person name="Wahlestedt C."/>
            <person name="Mattick J.S."/>
            <person name="Hume D.A."/>
            <person name="Kai C."/>
            <person name="Sasaki D."/>
            <person name="Tomaru Y."/>
            <person name="Fukuda S."/>
            <person name="Kanamori-Katayama M."/>
            <person name="Suzuki M."/>
            <person name="Aoki J."/>
            <person name="Arakawa T."/>
            <person name="Iida J."/>
            <person name="Imamura K."/>
            <person name="Itoh M."/>
            <person name="Kato T."/>
            <person name="Kawaji H."/>
            <person name="Kawagashira N."/>
            <person name="Kawashima T."/>
            <person name="Kojima M."/>
            <person name="Kondo S."/>
            <person name="Konno H."/>
            <person name="Nakano K."/>
            <person name="Ninomiya N."/>
            <person name="Nishio T."/>
            <person name="Okada M."/>
            <person name="Plessy C."/>
            <person name="Shibata K."/>
            <person name="Shiraki T."/>
            <person name="Suzuki S."/>
            <person name="Tagami M."/>
            <person name="Waki K."/>
            <person name="Watahiki A."/>
            <person name="Okamura-Oho Y."/>
            <person name="Suzuki H."/>
            <person name="Kawai J."/>
            <person name="Hayashizaki Y."/>
        </authorList>
    </citation>
    <scope>NUCLEOTIDE SEQUENCE [LARGE SCALE MRNA] (ISOFORMS 1 AND 2)</scope>
    <source>
        <strain>C57BL/6J</strain>
        <tissue>Aorta</tissue>
        <tissue>Vein</tissue>
    </source>
</reference>
<reference key="3">
    <citation type="submission" date="2009-01" db="EMBL/GenBank/DDBJ databases">
        <authorList>
            <person name="Mural R.J."/>
            <person name="Adams M.D."/>
            <person name="Myers E.W."/>
            <person name="Smith H.O."/>
            <person name="Venter J.C."/>
        </authorList>
    </citation>
    <scope>NUCLEOTIDE SEQUENCE [LARGE SCALE GENOMIC DNA]</scope>
</reference>
<reference key="4">
    <citation type="journal article" date="2004" name="Genome Res.">
        <title>The status, quality, and expansion of the NIH full-length cDNA project: the Mammalian Gene Collection (MGC).</title>
        <authorList>
            <consortium name="The MGC Project Team"/>
        </authorList>
    </citation>
    <scope>NUCLEOTIDE SEQUENCE [LARGE SCALE MRNA]</scope>
    <source>
        <strain>C57BL/6J</strain>
        <tissue>Brain</tissue>
    </source>
</reference>
<reference key="5">
    <citation type="journal article" date="1999" name="Genes Cells">
        <title>Severe osteopetrosis, defective interleukin-1 signalling and lymph node organogenesis in TRAF6-deficient mice.</title>
        <authorList>
            <person name="Naito A."/>
            <person name="Azuma S."/>
            <person name="Tanaka S."/>
            <person name="Miyazaki T."/>
            <person name="Takaki S."/>
            <person name="Takatsu K."/>
            <person name="Nakao K."/>
            <person name="Nakamura K."/>
            <person name="Katsuki M."/>
            <person name="Yamamoto T."/>
            <person name="Inoue J."/>
        </authorList>
    </citation>
    <scope>DISRUPTION PHENOTYPE</scope>
    <scope>FUNCTION</scope>
</reference>
<reference key="6">
    <citation type="journal article" date="1999" name="Genes Dev.">
        <title>TRAF6 deficiency results in osteopetrosis and defective interleukin-1, CD40, and LPS signaling.</title>
        <authorList>
            <person name="Lomaga M.A."/>
            <person name="Yeh W.C."/>
            <person name="Sarosi I."/>
            <person name="Duncan G.S."/>
            <person name="Furlonger C."/>
            <person name="Ho A."/>
            <person name="Morony S."/>
            <person name="Capparelli C."/>
            <person name="Van G."/>
            <person name="Kaufman S."/>
            <person name="van der Heiden A."/>
            <person name="Itie A."/>
            <person name="Wakeham A."/>
            <person name="Khoo W."/>
            <person name="Sasaki T."/>
            <person name="Cao Z."/>
            <person name="Penninger J.M."/>
            <person name="Paige C.J."/>
            <person name="Lacey D.L."/>
            <person name="Dunstan C.R."/>
            <person name="Boyle W.J."/>
            <person name="Goeddel D.V."/>
            <person name="Mak T.W."/>
        </authorList>
    </citation>
    <scope>DISRUPTION PHENOTYPE</scope>
    <scope>FUNCTION</scope>
</reference>
<reference key="7">
    <citation type="journal article" date="2000" name="EMBO J.">
        <title>The atypical PKC-interacting protein p62 channels NF-kappaB activation by the IL-1-TRAF6 pathway.</title>
        <authorList>
            <person name="Sanz L."/>
            <person name="Diaz-Meco M.T."/>
            <person name="Nakano H."/>
            <person name="Moscat J."/>
        </authorList>
    </citation>
    <scope>INTERACTION WITH SQSTM1 AND PRKCZ</scope>
</reference>
<reference key="8">
    <citation type="journal article" date="2000" name="J. Exp. Med.">
        <title>Requirement of tumor necrosis factor receptor-associated factor (TRAF)6 in interleukin 17 signal transduction.</title>
        <authorList>
            <person name="Schwandner R."/>
            <person name="Yamaguchi K."/>
            <person name="Cao Z."/>
        </authorList>
    </citation>
    <scope>INTERACTION WITH IL17R</scope>
</reference>
<reference key="9">
    <citation type="journal article" date="2001" name="J. Biol. Chem.">
        <title>The atypical protein kinase C-interacting protein p62 is a scaffold for NF-kappaB activation by nerve growth factor.</title>
        <authorList>
            <person name="Wooten M.W."/>
            <person name="Seibenhener M.L."/>
            <person name="Mamidipudi V."/>
            <person name="Diaz-Meco M.T."/>
            <person name="Barker P.A."/>
            <person name="Moscat J."/>
        </authorList>
    </citation>
    <scope>INTERACTION WITH SQSTM1; PRKCZ AND NGFR</scope>
</reference>
<reference key="10">
    <citation type="journal article" date="2002" name="Proc. Natl. Acad. Sci. U.S.A.">
        <title>TRAF6-deficient mice display hypohidrotic ectodermal dysplasia.</title>
        <authorList>
            <person name="Naito A."/>
            <person name="Yoshida H."/>
            <person name="Nishioka E."/>
            <person name="Satoh M."/>
            <person name="Azuma S."/>
            <person name="Yamamoto T."/>
            <person name="Nishikawa S."/>
            <person name="Inoue J."/>
        </authorList>
    </citation>
    <scope>DISRUPTION PHENOTYPE</scope>
</reference>
<reference key="11">
    <citation type="journal article" date="2003" name="EMBO J.">
        <title>Tpl2 transduces CD40 and TNF signals that activate ERK and regulates IgE induction by CD40.</title>
        <authorList>
            <person name="Eliopoulos A.G."/>
            <person name="Wang C.C."/>
            <person name="Dumitru C.D."/>
            <person name="Tsichlis P.N."/>
        </authorList>
    </citation>
    <scope>FUNCTION</scope>
    <scope>INTERACTION WITH CD40 AND MAP3K8</scope>
</reference>
<reference key="12">
    <citation type="journal article" date="2003" name="Immunity">
        <title>TRAF6 is a critical factor for dendritic cell maturation and development.</title>
        <authorList>
            <person name="Kobayashi T."/>
            <person name="Walsh P.T."/>
            <person name="Walsh M.C."/>
            <person name="Speirs K.M."/>
            <person name="Chiffoleau E."/>
            <person name="King C.G."/>
            <person name="Hancock W.W."/>
            <person name="Caamano J.H."/>
            <person name="Hunter C.A."/>
            <person name="Scott P."/>
            <person name="Turka L.A."/>
            <person name="Choi Y."/>
        </authorList>
    </citation>
    <scope>DISRUPTION PHENOTYPE</scope>
    <scope>FUNCTION</scope>
</reference>
<reference key="13">
    <citation type="journal article" date="2004" name="J. Immunol.">
        <title>TNFR-associated factor (TRAF) 6 is essential for MyD88-dependent pathway but not toll/IL-1 receptor domain-containing adapter-inducing IFN-beta (TRIF)-dependent pathway in TLR signaling.</title>
        <authorList>
            <person name="Gohda J."/>
            <person name="Matsumura T."/>
            <person name="Inoue J."/>
        </authorList>
    </citation>
    <scope>DISRUPTION PHENOTYPE</scope>
    <scope>FUNCTION</scope>
</reference>
<reference key="14">
    <citation type="journal article" date="2005" name="J. Biol. Chem.">
        <title>The p62 scaffold regulates nerve growth factor-induced NF-kappaB activation by influencing TRAF6 polyubiquitination.</title>
        <authorList>
            <person name="Wooten M.W."/>
            <person name="Geetha T."/>
            <person name="Seibenhener M.L."/>
            <person name="Babu J.R."/>
            <person name="Diaz-Meco M.T."/>
            <person name="Moscat J."/>
        </authorList>
    </citation>
    <scope>UBIQUITINATION</scope>
</reference>
<reference key="15">
    <citation type="journal article" date="2005" name="Science">
        <title>Dependence of self-tolerance on TRAF6-directed development of thymic stroma.</title>
        <authorList>
            <person name="Akiyama T."/>
            <person name="Maeda S."/>
            <person name="Yamane S."/>
            <person name="Ogino K."/>
            <person name="Kasai M."/>
            <person name="Kajiura F."/>
            <person name="Matsumoto M."/>
            <person name="Inoue J."/>
        </authorList>
    </citation>
    <scope>DISRUPTION PHENOTYPE</scope>
</reference>
<reference key="16">
    <citation type="journal article" date="2006" name="Nat. Immunol.">
        <title>Smad6 negatively regulates interleukin 1-receptor-Toll-like receptor signaling through direct interaction with the adapter Pellino-1.</title>
        <authorList>
            <person name="Choi K.C."/>
            <person name="Lee Y.S."/>
            <person name="Lim S."/>
            <person name="Choi H.K."/>
            <person name="Lee C.H."/>
            <person name="Lee E.K."/>
            <person name="Hong S."/>
            <person name="Kim I.H."/>
            <person name="Kim S.J."/>
            <person name="Park S.H."/>
        </authorList>
    </citation>
    <scope>IDENTIFICATION IN COMPLEX WITH IRAK1; IRAK4; MYD88 AND PELI1</scope>
</reference>
<reference key="17">
    <citation type="journal article" date="2007" name="Adv. Exp. Med. Biol.">
        <title>Characteristics and biological functions of TRAF6.</title>
        <authorList>
            <person name="Inoue J."/>
            <person name="Gohda J."/>
            <person name="Akiyama T."/>
        </authorList>
    </citation>
    <scope>DISRUPTION PHENOTYPE</scope>
    <scope>FUNCTION</scope>
</reference>
<reference key="18">
    <citation type="journal article" date="2007" name="J. Biol. Chem.">
        <title>The LIM protein, Limd1, regulates AP-1 activation through an interaction with Traf6 to influence osteoclast development.</title>
        <authorList>
            <person name="Feng Y."/>
            <person name="Zhao H."/>
            <person name="Luderer H.F."/>
            <person name="Epple H."/>
            <person name="Faccio R."/>
            <person name="Ross F.P."/>
            <person name="Teitelbaum S.L."/>
            <person name="Longmore G.D."/>
        </authorList>
    </citation>
    <scope>FUNCTION</scope>
    <scope>INTERACTION WITH LIMD1</scope>
</reference>
<reference key="19">
    <citation type="journal article" date="2008" name="J. Biol. Chem.">
        <title>FLN29 deficiency reveals its negative regulatory role in the Toll-like receptor (TLR) and retinoic acid-inducible gene I (RIG-I)-like helicase signaling pathway.</title>
        <authorList>
            <person name="Sanada T."/>
            <person name="Takaesu G."/>
            <person name="Mashima R."/>
            <person name="Yoshida R."/>
            <person name="Kobayashi T."/>
            <person name="Yoshimura A."/>
        </authorList>
    </citation>
    <scope>INTERACTION WITH TRAFD1</scope>
</reference>
<reference key="20">
    <citation type="journal article" date="2011" name="Immunity">
        <title>Antiviral protein Viperin promotes Toll-like receptor 7- and Toll-like receptor 9-mediated type I interferon production in plasmacytoid dendritic cells.</title>
        <authorList>
            <person name="Saitoh T."/>
            <person name="Satoh T."/>
            <person name="Yamamoto N."/>
            <person name="Uematsu S."/>
            <person name="Takeuchi O."/>
            <person name="Kawai T."/>
            <person name="Akira S."/>
        </authorList>
    </citation>
    <scope>INTERACTION WITH RSAD2</scope>
    <scope>SUBCELLULAR LOCATION</scope>
</reference>
<reference key="21">
    <citation type="journal article" date="2012" name="Mol. Cell">
        <title>A protective strategy against hyperinflammatory responses requiring the nontranscriptional actions of GPS2.</title>
        <authorList>
            <person name="Cardamone M.D."/>
            <person name="Krones A."/>
            <person name="Tanasa B."/>
            <person name="Taylor H."/>
            <person name="Ricci L."/>
            <person name="Ohgi K.A."/>
            <person name="Glass C.K."/>
            <person name="Rosenfeld M.G."/>
            <person name="Perissi V."/>
        </authorList>
    </citation>
    <scope>INTERACTION WITH GPS2</scope>
</reference>
<reference key="22">
    <citation type="journal article" date="2013" name="Nat. Immunol.">
        <title>A combinatorial F box protein directed pathway controls TRAF adaptor stability to regulate inflammation.</title>
        <authorList>
            <person name="Chen B.B."/>
            <person name="Coon T.A."/>
            <person name="Glasser J.R."/>
            <person name="McVerry B.J."/>
            <person name="Zhao J."/>
            <person name="Zhao Y."/>
            <person name="Zou C."/>
            <person name="Ellis B."/>
            <person name="Sciurba F.C."/>
            <person name="Zhang Y."/>
            <person name="Mallampalli R.K."/>
        </authorList>
    </citation>
    <scope>UBIQUITINATION AT LYS-327</scope>
    <scope>MUTAGENESIS OF LYS-327 AND TRP-363</scope>
</reference>
<reference key="23">
    <citation type="journal article" date="2014" name="Nat. Commun.">
        <title>LRRC19 expressed in the kidney induces TRAF2/6-mediated signals to prevent infection by uropathogenic bacteria.</title>
        <authorList>
            <person name="Su X."/>
            <person name="Min S."/>
            <person name="Cao S."/>
            <person name="Yan H."/>
            <person name="Zhao Y."/>
            <person name="Li H."/>
            <person name="Chai L."/>
            <person name="Mei S."/>
            <person name="Yang J."/>
            <person name="Zhang Y."/>
            <person name="Zhang Z."/>
            <person name="Liu F."/>
            <person name="Sun W."/>
            <person name="Che Y."/>
            <person name="Yang R."/>
        </authorList>
    </citation>
    <scope>UBIQUITINATION</scope>
</reference>
<reference key="24">
    <citation type="journal article" date="2016" name="Infect. Immun.">
        <title>Toxoplasma gondii GRA7-Induced TRAF6 Activation Contributes to Host Protective Immunity.</title>
        <authorList>
            <person name="Yang C.S."/>
            <person name="Yuk J.M."/>
            <person name="Lee Y.H."/>
            <person name="Jo E.K."/>
        </authorList>
    </citation>
    <scope>INTERACTION WITH TOXOPLASMA GRA7</scope>
</reference>
<reference key="25">
    <citation type="journal article" date="2016" name="J. Autoimmun.">
        <title>Autophagy-linked FYVE containing protein WDFY3 interacts with TRAF6 and modulates RANKL-induced osteoclastogenesis.</title>
        <authorList>
            <person name="Wu D.J."/>
            <person name="Gu R."/>
            <person name="Sarin R."/>
            <person name="Zavodovskaya R."/>
            <person name="Chen C.P."/>
            <person name="Christiansen B.A."/>
            <person name="Adamopoulos I.E."/>
        </authorList>
    </citation>
    <scope>INTERACTION WITH WDFY3</scope>
</reference>
<accession>P70196</accession>
<accession>Q6P9M0</accession>
<accession>Q8BLV2</accession>
<proteinExistence type="evidence at protein level"/>
<feature type="chain" id="PRO_0000056408" description="TNF receptor-associated factor 6">
    <location>
        <begin position="1"/>
        <end position="530"/>
    </location>
</feature>
<feature type="domain" description="MATH" evidence="4">
    <location>
        <begin position="358"/>
        <end position="507"/>
    </location>
</feature>
<feature type="zinc finger region" description="RING-type" evidence="5">
    <location>
        <begin position="70"/>
        <end position="109"/>
    </location>
</feature>
<feature type="zinc finger region" description="TRAF-type 1" evidence="6">
    <location>
        <begin position="150"/>
        <end position="202"/>
    </location>
</feature>
<feature type="zinc finger region" description="TRAF-type 2" evidence="6">
    <location>
        <begin position="203"/>
        <end position="259"/>
    </location>
</feature>
<feature type="region of interest" description="Interaction with TAX1BP1" evidence="1">
    <location>
        <begin position="1"/>
        <end position="362"/>
    </location>
</feature>
<feature type="region of interest" description="Interaction with TANK" evidence="2">
    <location>
        <begin position="363"/>
        <end position="530"/>
    </location>
</feature>
<feature type="coiled-coil region" evidence="3">
    <location>
        <begin position="299"/>
        <end position="356"/>
    </location>
</feature>
<feature type="cross-link" description="Glycyl lysine isopeptide (Lys-Gly) (interchain with G-Cter in SUMO); alternate" evidence="1">
    <location>
        <position position="124"/>
    </location>
</feature>
<feature type="cross-link" description="Glycyl lysine isopeptide (Lys-Gly) (interchain with G-Cter in ubiquitin); alternate" evidence="2">
    <location>
        <position position="124"/>
    </location>
</feature>
<feature type="cross-link" description="Glycyl lysine isopeptide (Lys-Gly) (interchain with G-Cter in SUMO)" evidence="1">
    <location>
        <position position="142"/>
    </location>
</feature>
<feature type="cross-link" description="Glycyl lysine isopeptide (Lys-Gly) (interchain with G-Cter in ubiquitin)" evidence="23">
    <location>
        <position position="327"/>
    </location>
</feature>
<feature type="cross-link" description="Glycyl lysine isopeptide (Lys-Gly) (interchain with G-Cter in SUMO)" evidence="1">
    <location>
        <position position="461"/>
    </location>
</feature>
<feature type="splice variant" id="VSP_007404" description="In isoform 2." evidence="27">
    <original>DAGHKCPVDNEILLENQLFPDNFAKREILSLTVKCPNKGCLQKMELRHLEDHQVHCEFALVNCPQCQRPFQKCQV</original>
    <variation>YLILRKHGALQQPNVKSMLETGHPKNRQTENTGQEHSRMDRNLRQLGSHPSLYYGMNRGLLPCLPTQPPGKLQSP</variation>
    <location>
        <begin position="100"/>
        <end position="174"/>
    </location>
</feature>
<feature type="splice variant" id="VSP_007405" description="In isoform 2." evidence="27">
    <location>
        <begin position="175"/>
        <end position="530"/>
    </location>
</feature>
<feature type="mutagenesis site" description="Abolished ubiquitination by the SCF(FBXL2) complex." evidence="23">
    <original>K</original>
    <variation>R</variation>
    <location>
        <position position="327"/>
    </location>
</feature>
<feature type="mutagenesis site" description="Decreased interaction with FBXL2." evidence="23">
    <original>W</original>
    <variation>A</variation>
    <location>
        <position position="363"/>
    </location>
</feature>
<feature type="sequence conflict" description="In Ref. 1; BAA12705 and 2; BAC30850." evidence="28" ref="1 2">
    <original>E</original>
    <variation>Q</variation>
    <location>
        <position position="251"/>
    </location>
</feature>
<feature type="sequence conflict" description="In Ref. 1; BAA12705 and 2; BAC30850." evidence="28" ref="1 2">
    <original>N</original>
    <variation>K</variation>
    <location>
        <position position="367"/>
    </location>
</feature>
<dbReference type="EC" id="2.3.2.27"/>
<dbReference type="EMBL" id="D84655">
    <property type="protein sequence ID" value="BAA12705.1"/>
    <property type="molecule type" value="mRNA"/>
</dbReference>
<dbReference type="EMBL" id="AK041172">
    <property type="protein sequence ID" value="BAC30850.1"/>
    <property type="molecule type" value="mRNA"/>
</dbReference>
<dbReference type="EMBL" id="AK155434">
    <property type="protein sequence ID" value="BAE33263.1"/>
    <property type="molecule type" value="mRNA"/>
</dbReference>
<dbReference type="EMBL" id="AL929571">
    <property type="status" value="NOT_ANNOTATED_CDS"/>
    <property type="molecule type" value="Genomic_DNA"/>
</dbReference>
<dbReference type="EMBL" id="CH466519">
    <property type="protein sequence ID" value="EDL27656.1"/>
    <property type="molecule type" value="Genomic_DNA"/>
</dbReference>
<dbReference type="EMBL" id="CH466519">
    <property type="protein sequence ID" value="EDL27657.1"/>
    <property type="molecule type" value="Genomic_DNA"/>
</dbReference>
<dbReference type="EMBL" id="BC060705">
    <property type="protein sequence ID" value="AAH60705.1"/>
    <property type="molecule type" value="mRNA"/>
</dbReference>
<dbReference type="CCDS" id="CCDS16464.1">
    <molecule id="P70196-1"/>
</dbReference>
<dbReference type="RefSeq" id="NP_001290202.1">
    <molecule id="P70196-1"/>
    <property type="nucleotide sequence ID" value="NM_001303273.1"/>
</dbReference>
<dbReference type="RefSeq" id="NP_033450.2">
    <molecule id="P70196-1"/>
    <property type="nucleotide sequence ID" value="NM_009424.3"/>
</dbReference>
<dbReference type="BMRB" id="P70196"/>
<dbReference type="SMR" id="P70196"/>
<dbReference type="BioGRID" id="204307">
    <property type="interactions" value="114"/>
</dbReference>
<dbReference type="CORUM" id="P70196"/>
<dbReference type="DIP" id="DIP-29812N"/>
<dbReference type="FunCoup" id="P70196">
    <property type="interactions" value="3572"/>
</dbReference>
<dbReference type="IntAct" id="P70196">
    <property type="interactions" value="42"/>
</dbReference>
<dbReference type="MINT" id="P70196"/>
<dbReference type="STRING" id="10090.ENSMUSP00000004949"/>
<dbReference type="iPTMnet" id="P70196"/>
<dbReference type="PhosphoSitePlus" id="P70196"/>
<dbReference type="PaxDb" id="10090-ENSMUSP00000004949"/>
<dbReference type="PeptideAtlas" id="P70196"/>
<dbReference type="ProteomicsDB" id="258843">
    <molecule id="P70196-1"/>
</dbReference>
<dbReference type="ProteomicsDB" id="258844">
    <molecule id="P70196-2"/>
</dbReference>
<dbReference type="Pumba" id="P70196"/>
<dbReference type="Antibodypedia" id="3895">
    <property type="antibodies" value="560 antibodies from 45 providers"/>
</dbReference>
<dbReference type="DNASU" id="22034"/>
<dbReference type="Ensembl" id="ENSMUST00000004949.8">
    <molecule id="P70196-1"/>
    <property type="protein sequence ID" value="ENSMUSP00000004949.8"/>
    <property type="gene ID" value="ENSMUSG00000027164.9"/>
</dbReference>
<dbReference type="GeneID" id="22034"/>
<dbReference type="KEGG" id="mmu:22034"/>
<dbReference type="UCSC" id="uc008lhl.2">
    <molecule id="P70196-2"/>
    <property type="organism name" value="mouse"/>
</dbReference>
<dbReference type="UCSC" id="uc008lhm.2">
    <molecule id="P70196-1"/>
    <property type="organism name" value="mouse"/>
</dbReference>
<dbReference type="AGR" id="MGI:108072"/>
<dbReference type="CTD" id="7189"/>
<dbReference type="MGI" id="MGI:108072">
    <property type="gene designation" value="Traf6"/>
</dbReference>
<dbReference type="VEuPathDB" id="HostDB:ENSMUSG00000027164"/>
<dbReference type="eggNOG" id="KOG0297">
    <property type="taxonomic scope" value="Eukaryota"/>
</dbReference>
<dbReference type="GeneTree" id="ENSGT00940000155426"/>
<dbReference type="HOGENOM" id="CLU_021061_5_0_1"/>
<dbReference type="InParanoid" id="P70196"/>
<dbReference type="OMA" id="FMHLQAL"/>
<dbReference type="OrthoDB" id="6475149at2759"/>
<dbReference type="PhylomeDB" id="P70196"/>
<dbReference type="TreeFam" id="TF321154"/>
<dbReference type="Reactome" id="R-MMU-1257604">
    <molecule id="P70196-2"/>
    <property type="pathway name" value="PIP3 activates AKT signaling"/>
</dbReference>
<dbReference type="Reactome" id="R-MMU-166058">
    <molecule id="P70196-2"/>
    <property type="pathway name" value="MyD88:MAL(TIRAP) cascade initiated on plasma membrane"/>
</dbReference>
<dbReference type="Reactome" id="R-MMU-168638">
    <molecule id="P70196-2"/>
    <property type="pathway name" value="NOD1/2 Signaling Pathway"/>
</dbReference>
<dbReference type="Reactome" id="R-MMU-193692">
    <molecule id="P70196-2"/>
    <property type="pathway name" value="Regulated proteolysis of p75NTR"/>
</dbReference>
<dbReference type="Reactome" id="R-MMU-202424">
    <molecule id="P70196-2"/>
    <property type="pathway name" value="Downstream TCR signaling"/>
</dbReference>
<dbReference type="Reactome" id="R-MMU-205043">
    <molecule id="P70196-2"/>
    <property type="pathway name" value="NRIF signals cell death from the nucleus"/>
</dbReference>
<dbReference type="Reactome" id="R-MMU-209543">
    <molecule id="P70196-2"/>
    <property type="pathway name" value="p75NTR recruits signalling complexes"/>
</dbReference>
<dbReference type="Reactome" id="R-MMU-209560">
    <molecule id="P70196-2"/>
    <property type="pathway name" value="NF-kB is activated and signals survival"/>
</dbReference>
<dbReference type="Reactome" id="R-MMU-2871837">
    <molecule id="P70196-2"/>
    <property type="pathway name" value="FCERI mediated NF-kB activation"/>
</dbReference>
<dbReference type="Reactome" id="R-MMU-445989">
    <molecule id="P70196-2"/>
    <property type="pathway name" value="TAK1-dependent IKK and NF-kappa-B activation"/>
</dbReference>
<dbReference type="Reactome" id="R-MMU-450302">
    <molecule id="P70196-2"/>
    <property type="pathway name" value="activated TAK1 mediates p38 MAPK activation"/>
</dbReference>
<dbReference type="Reactome" id="R-MMU-450321">
    <molecule id="P70196-2"/>
    <property type="pathway name" value="JNK (c-Jun kinases) phosphorylation and activation mediated by activated human TAK1"/>
</dbReference>
<dbReference type="Reactome" id="R-MMU-5607764">
    <molecule id="P70196-2"/>
    <property type="pathway name" value="CLEC7A (Dectin-1) signaling"/>
</dbReference>
<dbReference type="Reactome" id="R-MMU-5689880">
    <molecule id="P70196-2"/>
    <property type="pathway name" value="Ub-specific processing proteases"/>
</dbReference>
<dbReference type="Reactome" id="R-MMU-5689896">
    <molecule id="P70196-2"/>
    <property type="pathway name" value="Ovarian tumor domain proteases"/>
</dbReference>
<dbReference type="Reactome" id="R-MMU-6811558">
    <molecule id="P70196-2"/>
    <property type="pathway name" value="PI5P, PP2A and IER3 Regulate PI3K/AKT Signaling"/>
</dbReference>
<dbReference type="Reactome" id="R-MMU-9020702">
    <molecule id="P70196-2"/>
    <property type="pathway name" value="Interleukin-1 signaling"/>
</dbReference>
<dbReference type="Reactome" id="R-MMU-937039">
    <molecule id="P70196-2"/>
    <property type="pathway name" value="IRAK1 recruits IKK complex"/>
</dbReference>
<dbReference type="Reactome" id="R-MMU-937041">
    <molecule id="P70196-2"/>
    <property type="pathway name" value="IKK complex recruitment mediated by RIP1"/>
</dbReference>
<dbReference type="Reactome" id="R-MMU-937042">
    <molecule id="P70196-2"/>
    <property type="pathway name" value="IRAK2 mediated activation of TAK1 complex"/>
</dbReference>
<dbReference type="Reactome" id="R-MMU-937072">
    <molecule id="P70196-2"/>
    <property type="pathway name" value="TRAF6-mediated induction of TAK1 complex within TLR4 complex"/>
</dbReference>
<dbReference type="Reactome" id="R-MMU-9645460">
    <molecule id="P70196-2"/>
    <property type="pathway name" value="Alpha-protein kinase 1 signaling pathway"/>
</dbReference>
<dbReference type="Reactome" id="R-MMU-975138">
    <molecule id="P70196-2"/>
    <property type="pathway name" value="TRAF6 mediated induction of NFkB and MAP kinases upon TLR7/8 or 9 activation"/>
</dbReference>
<dbReference type="Reactome" id="R-MMU-975144">
    <molecule id="P70196-2"/>
    <property type="pathway name" value="IRAK1 recruits IKK complex upon TLR7/8 or 9 stimulation"/>
</dbReference>
<dbReference type="Reactome" id="R-MMU-975163">
    <molecule id="P70196-2"/>
    <property type="pathway name" value="IRAK2 mediated activation of TAK1 complex upon TLR7/8 or 9 stimulation"/>
</dbReference>
<dbReference type="Reactome" id="R-MMU-9758274">
    <molecule id="P70196-2"/>
    <property type="pathway name" value="Regulation of NF-kappa B signaling"/>
</dbReference>
<dbReference type="Reactome" id="R-MMU-975871">
    <molecule id="P70196-2"/>
    <property type="pathway name" value="MyD88 cascade initiated on plasma membrane"/>
</dbReference>
<dbReference type="UniPathway" id="UPA00143"/>
<dbReference type="BioGRID-ORCS" id="22034">
    <property type="hits" value="21 hits in 80 CRISPR screens"/>
</dbReference>
<dbReference type="ChiTaRS" id="Traf6">
    <property type="organism name" value="mouse"/>
</dbReference>
<dbReference type="PRO" id="PR:P70196"/>
<dbReference type="Proteomes" id="UP000000589">
    <property type="component" value="Chromosome 2"/>
</dbReference>
<dbReference type="RNAct" id="P70196">
    <property type="molecule type" value="protein"/>
</dbReference>
<dbReference type="Bgee" id="ENSMUSG00000027164">
    <property type="expression patterns" value="Expressed in ileal epithelium and 213 other cell types or tissues"/>
</dbReference>
<dbReference type="GO" id="GO:0035631">
    <property type="term" value="C:CD40 receptor complex"/>
    <property type="evidence" value="ECO:0000314"/>
    <property type="project" value="BHF-UCL"/>
</dbReference>
<dbReference type="GO" id="GO:0005938">
    <property type="term" value="C:cell cortex"/>
    <property type="evidence" value="ECO:0007669"/>
    <property type="project" value="UniProtKB-SubCell"/>
</dbReference>
<dbReference type="GO" id="GO:0009898">
    <property type="term" value="C:cytoplasmic side of plasma membrane"/>
    <property type="evidence" value="ECO:0000314"/>
    <property type="project" value="BHF-UCL"/>
</dbReference>
<dbReference type="GO" id="GO:0005829">
    <property type="term" value="C:cytosol"/>
    <property type="evidence" value="ECO:0000314"/>
    <property type="project" value="UniProtKB"/>
</dbReference>
<dbReference type="GO" id="GO:0098978">
    <property type="term" value="C:glutamatergic synapse"/>
    <property type="evidence" value="ECO:0000314"/>
    <property type="project" value="SynGO"/>
</dbReference>
<dbReference type="GO" id="GO:0005811">
    <property type="term" value="C:lipid droplet"/>
    <property type="evidence" value="ECO:0000314"/>
    <property type="project" value="UniProtKB"/>
</dbReference>
<dbReference type="GO" id="GO:0005634">
    <property type="term" value="C:nucleus"/>
    <property type="evidence" value="ECO:0007669"/>
    <property type="project" value="UniProtKB-SubCell"/>
</dbReference>
<dbReference type="GO" id="GO:0048471">
    <property type="term" value="C:perinuclear region of cytoplasm"/>
    <property type="evidence" value="ECO:0007669"/>
    <property type="project" value="Ensembl"/>
</dbReference>
<dbReference type="GO" id="GO:0032991">
    <property type="term" value="C:protein-containing complex"/>
    <property type="evidence" value="ECO:0000266"/>
    <property type="project" value="MGI"/>
</dbReference>
<dbReference type="GO" id="GO:0042826">
    <property type="term" value="F:histone deacetylase binding"/>
    <property type="evidence" value="ECO:0007669"/>
    <property type="project" value="Ensembl"/>
</dbReference>
<dbReference type="GO" id="GO:0042802">
    <property type="term" value="F:identical protein binding"/>
    <property type="evidence" value="ECO:0007669"/>
    <property type="project" value="Ensembl"/>
</dbReference>
<dbReference type="GO" id="GO:0043422">
    <property type="term" value="F:protein kinase B binding"/>
    <property type="evidence" value="ECO:0007669"/>
    <property type="project" value="Ensembl"/>
</dbReference>
<dbReference type="GO" id="GO:0030674">
    <property type="term" value="F:protein-macromolecule adaptor activity"/>
    <property type="evidence" value="ECO:0007669"/>
    <property type="project" value="Ensembl"/>
</dbReference>
<dbReference type="GO" id="GO:0005164">
    <property type="term" value="F:tumor necrosis factor receptor binding"/>
    <property type="evidence" value="ECO:0007669"/>
    <property type="project" value="InterPro"/>
</dbReference>
<dbReference type="GO" id="GO:0031624">
    <property type="term" value="F:ubiquitin conjugating enzyme binding"/>
    <property type="evidence" value="ECO:0000266"/>
    <property type="project" value="MGI"/>
</dbReference>
<dbReference type="GO" id="GO:0061630">
    <property type="term" value="F:ubiquitin protein ligase activity"/>
    <property type="evidence" value="ECO:0000314"/>
    <property type="project" value="UniProt"/>
</dbReference>
<dbReference type="GO" id="GO:0004842">
    <property type="term" value="F:ubiquitin-protein transferase activity"/>
    <property type="evidence" value="ECO:0000314"/>
    <property type="project" value="UniProtKB"/>
</dbReference>
<dbReference type="GO" id="GO:0034450">
    <property type="term" value="F:ubiquitin-ubiquitin ligase activity"/>
    <property type="evidence" value="ECO:0007669"/>
    <property type="project" value="Ensembl"/>
</dbReference>
<dbReference type="GO" id="GO:0008270">
    <property type="term" value="F:zinc ion binding"/>
    <property type="evidence" value="ECO:0007669"/>
    <property type="project" value="UniProtKB-KW"/>
</dbReference>
<dbReference type="GO" id="GO:0009887">
    <property type="term" value="P:animal organ morphogenesis"/>
    <property type="evidence" value="ECO:0000315"/>
    <property type="project" value="MGI"/>
</dbReference>
<dbReference type="GO" id="GO:0019886">
    <property type="term" value="P:antigen processing and presentation of exogenous peptide antigen via MHC class II"/>
    <property type="evidence" value="ECO:0000315"/>
    <property type="project" value="MGI"/>
</dbReference>
<dbReference type="GO" id="GO:0140374">
    <property type="term" value="P:antiviral innate immune response"/>
    <property type="evidence" value="ECO:0007669"/>
    <property type="project" value="Ensembl"/>
</dbReference>
<dbReference type="GO" id="GO:0000045">
    <property type="term" value="P:autophagosome assembly"/>
    <property type="evidence" value="ECO:0007669"/>
    <property type="project" value="Ensembl"/>
</dbReference>
<dbReference type="GO" id="GO:0046849">
    <property type="term" value="P:bone remodeling"/>
    <property type="evidence" value="ECO:0000315"/>
    <property type="project" value="UniProtKB"/>
</dbReference>
<dbReference type="GO" id="GO:0045453">
    <property type="term" value="P:bone resorption"/>
    <property type="evidence" value="ECO:0000315"/>
    <property type="project" value="UniProtKB"/>
</dbReference>
<dbReference type="GO" id="GO:0007249">
    <property type="term" value="P:canonical NF-kappaB signal transduction"/>
    <property type="evidence" value="ECO:0000315"/>
    <property type="project" value="UniProtKB"/>
</dbReference>
<dbReference type="GO" id="GO:0023035">
    <property type="term" value="P:CD40 signaling pathway"/>
    <property type="evidence" value="ECO:0007669"/>
    <property type="project" value="Ensembl"/>
</dbReference>
<dbReference type="GO" id="GO:0048468">
    <property type="term" value="P:cell development"/>
    <property type="evidence" value="ECO:0000315"/>
    <property type="project" value="MGI"/>
</dbReference>
<dbReference type="GO" id="GO:0071222">
    <property type="term" value="P:cellular response to lipopolysaccharide"/>
    <property type="evidence" value="ECO:0000266"/>
    <property type="project" value="MGI"/>
</dbReference>
<dbReference type="GO" id="GO:0002753">
    <property type="term" value="P:cytoplasmic pattern recognition receptor signaling pathway"/>
    <property type="evidence" value="ECO:0007669"/>
    <property type="project" value="Ensembl"/>
</dbReference>
<dbReference type="GO" id="GO:0006974">
    <property type="term" value="P:DNA damage response"/>
    <property type="evidence" value="ECO:0007669"/>
    <property type="project" value="UniProtKB-KW"/>
</dbReference>
<dbReference type="GO" id="GO:0006955">
    <property type="term" value="P:immune response"/>
    <property type="evidence" value="ECO:0000315"/>
    <property type="project" value="MGI"/>
</dbReference>
<dbReference type="GO" id="GO:0001701">
    <property type="term" value="P:in utero embryonic development"/>
    <property type="evidence" value="ECO:0000315"/>
    <property type="project" value="MGI"/>
</dbReference>
<dbReference type="GO" id="GO:0070498">
    <property type="term" value="P:interleukin-1-mediated signaling pathway"/>
    <property type="evidence" value="ECO:0000315"/>
    <property type="project" value="UniProtKB"/>
</dbReference>
<dbReference type="GO" id="GO:0097400">
    <property type="term" value="P:interleukin-17-mediated signaling pathway"/>
    <property type="evidence" value="ECO:0000314"/>
    <property type="project" value="MGI"/>
</dbReference>
<dbReference type="GO" id="GO:0038173">
    <property type="term" value="P:interleukin-17A-mediated signaling pathway"/>
    <property type="evidence" value="ECO:0007669"/>
    <property type="project" value="Ensembl"/>
</dbReference>
<dbReference type="GO" id="GO:0038172">
    <property type="term" value="P:interleukin-33-mediated signaling pathway"/>
    <property type="evidence" value="ECO:0007669"/>
    <property type="project" value="Ensembl"/>
</dbReference>
<dbReference type="GO" id="GO:0031663">
    <property type="term" value="P:lipopolysaccharide-mediated signaling pathway"/>
    <property type="evidence" value="ECO:0000315"/>
    <property type="project" value="MGI"/>
</dbReference>
<dbReference type="GO" id="GO:0043011">
    <property type="term" value="P:myeloid dendritic cell differentiation"/>
    <property type="evidence" value="ECO:0000315"/>
    <property type="project" value="MGI"/>
</dbReference>
<dbReference type="GO" id="GO:0000122">
    <property type="term" value="P:negative regulation of transcription by RNA polymerase II"/>
    <property type="evidence" value="ECO:0007669"/>
    <property type="project" value="Ensembl"/>
</dbReference>
<dbReference type="GO" id="GO:0001843">
    <property type="term" value="P:neural tube closure"/>
    <property type="evidence" value="ECO:0000315"/>
    <property type="project" value="UniProtKB"/>
</dbReference>
<dbReference type="GO" id="GO:0038061">
    <property type="term" value="P:non-canonical NF-kappaB signal transduction"/>
    <property type="evidence" value="ECO:0007669"/>
    <property type="project" value="Ensembl"/>
</dbReference>
<dbReference type="GO" id="GO:0042475">
    <property type="term" value="P:odontogenesis of dentin-containing tooth"/>
    <property type="evidence" value="ECO:0000315"/>
    <property type="project" value="MGI"/>
</dbReference>
<dbReference type="GO" id="GO:0001503">
    <property type="term" value="P:ossification"/>
    <property type="evidence" value="ECO:0000315"/>
    <property type="project" value="MGI"/>
</dbReference>
<dbReference type="GO" id="GO:0030316">
    <property type="term" value="P:osteoclast differentiation"/>
    <property type="evidence" value="ECO:0000315"/>
    <property type="project" value="UniProtKB"/>
</dbReference>
<dbReference type="GO" id="GO:0043123">
    <property type="term" value="P:positive regulation of canonical NF-kappaB signal transduction"/>
    <property type="evidence" value="ECO:0000315"/>
    <property type="project" value="UniProtKB"/>
</dbReference>
<dbReference type="GO" id="GO:0032735">
    <property type="term" value="P:positive regulation of interleukin-12 production"/>
    <property type="evidence" value="ECO:0000315"/>
    <property type="project" value="MGI"/>
</dbReference>
<dbReference type="GO" id="GO:0032743">
    <property type="term" value="P:positive regulation of interleukin-2 production"/>
    <property type="evidence" value="ECO:0007669"/>
    <property type="project" value="Ensembl"/>
</dbReference>
<dbReference type="GO" id="GO:0032755">
    <property type="term" value="P:positive regulation of interleukin-6 production"/>
    <property type="evidence" value="ECO:0000315"/>
    <property type="project" value="MGI"/>
</dbReference>
<dbReference type="GO" id="GO:0046330">
    <property type="term" value="P:positive regulation of JNK cascade"/>
    <property type="evidence" value="ECO:0007669"/>
    <property type="project" value="Ensembl"/>
</dbReference>
<dbReference type="GO" id="GO:1904996">
    <property type="term" value="P:positive regulation of leukocyte adhesion to vascular endothelial cell"/>
    <property type="evidence" value="ECO:0007669"/>
    <property type="project" value="Ensembl"/>
</dbReference>
<dbReference type="GO" id="GO:0031666">
    <property type="term" value="P:positive regulation of lipopolysaccharide-mediated signaling pathway"/>
    <property type="evidence" value="ECO:0000315"/>
    <property type="project" value="UniProtKB"/>
</dbReference>
<dbReference type="GO" id="GO:0051092">
    <property type="term" value="P:positive regulation of NF-kappaB transcription factor activity"/>
    <property type="evidence" value="ECO:0000315"/>
    <property type="project" value="UniProtKB"/>
</dbReference>
<dbReference type="GO" id="GO:0045672">
    <property type="term" value="P:positive regulation of osteoclast differentiation"/>
    <property type="evidence" value="ECO:0007669"/>
    <property type="project" value="Ensembl"/>
</dbReference>
<dbReference type="GO" id="GO:0002726">
    <property type="term" value="P:positive regulation of T cell cytokine production"/>
    <property type="evidence" value="ECO:0007669"/>
    <property type="project" value="Ensembl"/>
</dbReference>
<dbReference type="GO" id="GO:0042102">
    <property type="term" value="P:positive regulation of T cell proliferation"/>
    <property type="evidence" value="ECO:0000315"/>
    <property type="project" value="UniProtKB"/>
</dbReference>
<dbReference type="GO" id="GO:0045944">
    <property type="term" value="P:positive regulation of transcription by RNA polymerase II"/>
    <property type="evidence" value="ECO:0007669"/>
    <property type="project" value="Ensembl"/>
</dbReference>
<dbReference type="GO" id="GO:0032481">
    <property type="term" value="P:positive regulation of type I interferon production"/>
    <property type="evidence" value="ECO:0000314"/>
    <property type="project" value="UniProt"/>
</dbReference>
<dbReference type="GO" id="GO:0051865">
    <property type="term" value="P:protein autoubiquitination"/>
    <property type="evidence" value="ECO:0000266"/>
    <property type="project" value="MGI"/>
</dbReference>
<dbReference type="GO" id="GO:0141198">
    <property type="term" value="P:protein branched polyubiquitination"/>
    <property type="evidence" value="ECO:0000250"/>
    <property type="project" value="UniProtKB"/>
</dbReference>
<dbReference type="GO" id="GO:0070534">
    <property type="term" value="P:protein K63-linked ubiquitination"/>
    <property type="evidence" value="ECO:0000314"/>
    <property type="project" value="UniProtKB"/>
</dbReference>
<dbReference type="GO" id="GO:0000209">
    <property type="term" value="P:protein polyubiquitination"/>
    <property type="evidence" value="ECO:0000315"/>
    <property type="project" value="MGI"/>
</dbReference>
<dbReference type="GO" id="GO:0016567">
    <property type="term" value="P:protein ubiquitination"/>
    <property type="evidence" value="ECO:0000314"/>
    <property type="project" value="MGI"/>
</dbReference>
<dbReference type="GO" id="GO:0042981">
    <property type="term" value="P:regulation of apoptotic process"/>
    <property type="evidence" value="ECO:0007669"/>
    <property type="project" value="InterPro"/>
</dbReference>
<dbReference type="GO" id="GO:0002637">
    <property type="term" value="P:regulation of immunoglobulin production"/>
    <property type="evidence" value="ECO:0000314"/>
    <property type="project" value="MGI"/>
</dbReference>
<dbReference type="GO" id="GO:0098696">
    <property type="term" value="P:regulation of neurotransmitter receptor localization to postsynaptic specialization membrane"/>
    <property type="evidence" value="ECO:0000314"/>
    <property type="project" value="SynGO"/>
</dbReference>
<dbReference type="GO" id="GO:0007165">
    <property type="term" value="P:signal transduction"/>
    <property type="evidence" value="ECO:0000314"/>
    <property type="project" value="MGI"/>
</dbReference>
<dbReference type="GO" id="GO:0050852">
    <property type="term" value="P:T cell receptor signaling pathway"/>
    <property type="evidence" value="ECO:0007669"/>
    <property type="project" value="Ensembl"/>
</dbReference>
<dbReference type="GO" id="GO:0042088">
    <property type="term" value="P:T-helper 1 type immune response"/>
    <property type="evidence" value="ECO:0000315"/>
    <property type="project" value="MGI"/>
</dbReference>
<dbReference type="GO" id="GO:0034142">
    <property type="term" value="P:toll-like receptor 4 signaling pathway"/>
    <property type="evidence" value="ECO:0007669"/>
    <property type="project" value="Ensembl"/>
</dbReference>
<dbReference type="GO" id="GO:0033209">
    <property type="term" value="P:tumor necrosis factor-mediated signaling pathway"/>
    <property type="evidence" value="ECO:0007669"/>
    <property type="project" value="Ensembl"/>
</dbReference>
<dbReference type="CDD" id="cd03776">
    <property type="entry name" value="MATH_TRAF6"/>
    <property type="match status" value="1"/>
</dbReference>
<dbReference type="CDD" id="cd16643">
    <property type="entry name" value="mRING-HC-C3HC3D_TRAF6"/>
    <property type="match status" value="1"/>
</dbReference>
<dbReference type="FunFam" id="2.60.210.10:FF:000010">
    <property type="entry name" value="TNF receptor-associated factor"/>
    <property type="match status" value="1"/>
</dbReference>
<dbReference type="FunFam" id="3.30.40.10:FF:000179">
    <property type="entry name" value="TNF receptor-associated factor"/>
    <property type="match status" value="1"/>
</dbReference>
<dbReference type="FunFam" id="3.30.40.10:FF:000211">
    <property type="entry name" value="TNF receptor-associated factor"/>
    <property type="match status" value="1"/>
</dbReference>
<dbReference type="FunFam" id="3.30.40.10:FF:000289">
    <property type="entry name" value="TNF receptor-associated factor"/>
    <property type="match status" value="1"/>
</dbReference>
<dbReference type="Gene3D" id="2.60.210.10">
    <property type="entry name" value="Apoptosis, Tumor Necrosis Factor Receptor Associated Protein 2, Chain A"/>
    <property type="match status" value="1"/>
</dbReference>
<dbReference type="Gene3D" id="3.30.40.10">
    <property type="entry name" value="Zinc/RING finger domain, C3HC4 (zinc finger)"/>
    <property type="match status" value="3"/>
</dbReference>
<dbReference type="InterPro" id="IPR002083">
    <property type="entry name" value="MATH/TRAF_dom"/>
</dbReference>
<dbReference type="InterPro" id="IPR012227">
    <property type="entry name" value="TNF_rcpt-assoc_TRAF_met"/>
</dbReference>
<dbReference type="InterPro" id="IPR008974">
    <property type="entry name" value="TRAF-like"/>
</dbReference>
<dbReference type="InterPro" id="IPR049342">
    <property type="entry name" value="TRAF1-6_MATH_dom"/>
</dbReference>
<dbReference type="InterPro" id="IPR037309">
    <property type="entry name" value="TRAF6_MATH"/>
</dbReference>
<dbReference type="InterPro" id="IPR027139">
    <property type="entry name" value="TRAF6_RING-HC"/>
</dbReference>
<dbReference type="InterPro" id="IPR041310">
    <property type="entry name" value="TRAF6_Z2"/>
</dbReference>
<dbReference type="InterPro" id="IPR001841">
    <property type="entry name" value="Znf_RING"/>
</dbReference>
<dbReference type="InterPro" id="IPR013083">
    <property type="entry name" value="Znf_RING/FYVE/PHD"/>
</dbReference>
<dbReference type="InterPro" id="IPR017907">
    <property type="entry name" value="Znf_RING_CS"/>
</dbReference>
<dbReference type="InterPro" id="IPR001293">
    <property type="entry name" value="Znf_TRAF"/>
</dbReference>
<dbReference type="PANTHER" id="PTHR10131">
    <property type="entry name" value="TNF RECEPTOR ASSOCIATED FACTOR"/>
    <property type="match status" value="1"/>
</dbReference>
<dbReference type="PANTHER" id="PTHR10131:SF152">
    <property type="entry name" value="TNF RECEPTOR-ASSOCIATED FACTOR 6"/>
    <property type="match status" value="1"/>
</dbReference>
<dbReference type="Pfam" id="PF21355">
    <property type="entry name" value="TRAF-mep_MATH"/>
    <property type="match status" value="1"/>
</dbReference>
<dbReference type="Pfam" id="PF18048">
    <property type="entry name" value="TRAF6_Z2"/>
    <property type="match status" value="1"/>
</dbReference>
<dbReference type="Pfam" id="PF13923">
    <property type="entry name" value="zf-C3HC4_2"/>
    <property type="match status" value="1"/>
</dbReference>
<dbReference type="Pfam" id="PF02176">
    <property type="entry name" value="zf-TRAF"/>
    <property type="match status" value="1"/>
</dbReference>
<dbReference type="PIRSF" id="PIRSF015614">
    <property type="entry name" value="TRAF"/>
    <property type="match status" value="1"/>
</dbReference>
<dbReference type="SMART" id="SM00061">
    <property type="entry name" value="MATH"/>
    <property type="match status" value="1"/>
</dbReference>
<dbReference type="SMART" id="SM00184">
    <property type="entry name" value="RING"/>
    <property type="match status" value="1"/>
</dbReference>
<dbReference type="SUPFAM" id="SSF57850">
    <property type="entry name" value="RING/U-box"/>
    <property type="match status" value="1"/>
</dbReference>
<dbReference type="SUPFAM" id="SSF49599">
    <property type="entry name" value="TRAF domain-like"/>
    <property type="match status" value="3"/>
</dbReference>
<dbReference type="PROSITE" id="PS50144">
    <property type="entry name" value="MATH"/>
    <property type="match status" value="1"/>
</dbReference>
<dbReference type="PROSITE" id="PS00518">
    <property type="entry name" value="ZF_RING_1"/>
    <property type="match status" value="1"/>
</dbReference>
<dbReference type="PROSITE" id="PS50089">
    <property type="entry name" value="ZF_RING_2"/>
    <property type="match status" value="1"/>
</dbReference>
<dbReference type="PROSITE" id="PS50145">
    <property type="entry name" value="ZF_TRAF"/>
    <property type="match status" value="2"/>
</dbReference>
<keyword id="KW-0025">Alternative splicing</keyword>
<keyword id="KW-0175">Coiled coil</keyword>
<keyword id="KW-0963">Cytoplasm</keyword>
<keyword id="KW-0227">DNA damage</keyword>
<keyword id="KW-0391">Immunity</keyword>
<keyword id="KW-1017">Isopeptide bond</keyword>
<keyword id="KW-0551">Lipid droplet</keyword>
<keyword id="KW-0479">Metal-binding</keyword>
<keyword id="KW-0539">Nucleus</keyword>
<keyword id="KW-0892">Osteogenesis</keyword>
<keyword id="KW-1185">Reference proteome</keyword>
<keyword id="KW-0677">Repeat</keyword>
<keyword id="KW-0808">Transferase</keyword>
<keyword id="KW-0832">Ubl conjugation</keyword>
<keyword id="KW-0833">Ubl conjugation pathway</keyword>
<keyword id="KW-0862">Zinc</keyword>
<keyword id="KW-0863">Zinc-finger</keyword>
<comment type="function">
    <text evidence="2 7 8 13 14 15 18 19">E3 ubiquitin ligase that, together with UBE2N and UBE2V1, mediates the synthesis of 'Lys-63'-linked-polyubiquitin chains conjugated to proteins, such as ECSIT, IKBKG, IRAK1, AKT1 and AKT2 (PubMed:15322147, PubMed:17633018). Also mediates ubiquitination of free/unanchored polyubiquitin chain that leads to MAP3K7 activation (By similarity). Leads to the activation of NF-kappa-B and JUN. Seems to also play a role in dendritic cells (DCs) maturation and/or activation (PubMed:14499111). Represses c-Myb-mediated transactivation, in B-lymphocytes (By similarity). Adapter protein that seems to play a role in signal transduction initiated via TNF receptor, IL-1 receptor and IL-17 receptor (PubMed:10215628, PubMed:10421844). Regulates osteoclast differentiation by mediating the activation of adapter protein complex 1 (AP-1) and NF-kappa-B, in response to RANK-L stimulation (PubMed:10421844, PubMed:17092936). Together with MAP3K8, mediates CD40 signals that activate ERK in B-cells and macrophages, and thus may play a role in the regulation of immunoglobulin production (PubMed:12881420). Acts as a regulator of the JNK and NF-kappa-B signaling pathways by initiating assembly of heterotypic 'Lys-63'-/'Lys-48'-linked branched ubiquitin chains that are then recognized by TAB2: TRAF6 catalyzes initial 'Lys-63'-linked-polyubiquitin chains that are then branched via 'Lys-48'-linked polyubiquitin by HUWE1 (By similarity). 'Lys-63'-/'Lys-48'-linked branched ubiquitin chains protect 'Lys-63'-linkages from CYLD deubiquitination (By similarity). Also participates in the TCR signaling by ubiquitinating LAT (By similarity).</text>
</comment>
<comment type="catalytic activity">
    <reaction evidence="2">
        <text>S-ubiquitinyl-[E2 ubiquitin-conjugating enzyme]-L-cysteine + [acceptor protein]-L-lysine = [E2 ubiquitin-conjugating enzyme]-L-cysteine + N(6)-ubiquitinyl-[acceptor protein]-L-lysine.</text>
        <dbReference type="EC" id="2.3.2.27"/>
    </reaction>
</comment>
<comment type="pathway">
    <text evidence="2">Protein modification; protein ubiquitination.</text>
</comment>
<comment type="subunit">
    <text evidence="2 9 10 11 13 17 18 20 21 22 26">Homotrimer (By similarity). Homooligomer (By similarity). N-terminal region is dimeric while C-terminal region is trimeric; maybe providing a mode of oligomerization. Upon IL1B treatment, forms a complex with PELI1, IRAK1, IRAK4 and MYD88; this complex recruits MAP3K7/TAK1, TAB1 and TAB2 to mediate NF-kappa-B activation. Direct binding of SMAD6 to PELI1 prevents the complex formation and hence negatively regulates IL1R-TLR signaling and eventually NF-kappa-B-mediated gene expression. Binds to TNFRSF5/CD40 and TNFRSF11A/RANK (By similarity). Associates with NGFR, TNFRSF17, IRAK2, IRAK3, PELI2, PELI3, RIPK2, MAP3K1, MAP3K5, MAP3K14, CSK, TRAF, TRAF-interacting protein TRIP and TNF receptor associated protein TDP2. Binds UBE2V1. Interacts with MAVS/IPS1. Interacts with TAX1BP1; this interaction mediates deubiquitination of TRAF6 and inhibition of NF-kappa-B activation (By similarity). Interacts with IL17R. Interacts with SQSTM1 bridging NTRK1 and NGFR. Forms a ternary complex with SQSTM1 and PRKCZ. Interacts with IL1RL1. Interacts with AJUBA (By similarity). Interacts with TRAFD1. Interacts with TICAM2. Interacts with ZFAND5. Interacts with ARRB1 and ARRB2 (By similarity). Interacts with MAP3K7 and TAB1/MAP3K7IP1; during IL-1 signaling. Interacts with UBE2N. Interacts with TGFBR1, HDAC1 and RANGAP1. Interacts with AKT1, AKT2 and AKT3. Interacts (via TRAF domains) with NUMBL (via C-terminal) (By similarity). Interacts (via TRAF domains) with DYNC2I2 (via WD domains). Interacts with RBCK1 (By similarity). Interacts with LIMD1 (via LIM domains). Interacts with RSAD2/viperin. Interacts with IFIT3 (via N-terminus) (By similarity). Interacts (via C-terminus) with EIF2AK2/PKR (via the kinase catalytic domain). Interacts with CARD14 (By similarity). Interacts with CD40 and MAP3K8; the interaction is required for ERK activation. Interacts with TICAM1 and this interaction is enhanced in the presence of WDFY1 (By similarity). Interacts with TANK; this interaction increases in response to DNA damage (By similarity). Interacts with USP10; this interaction increases in response to DNA damage (By similarity). Interacts with ZC3H12A; this interaction increases in response to DNA damage and is stimulated by TANK (By similarity). Interacts with WDFY3 (PubMed:27330028). Interacts with TRIM13 (By similarity). Interacts with GPS2 (PubMed:22424771). Interacts (via C-terminus) with SASH1 (By similarity). Interacts with LRRC19 (By similarity). Interacts with IL17RA and TRAF3IP2. Interacts with TOMM70 (By similarity). Interacts with AMBRA1; interaction is required to mediate 'Lys-63'-linked ubiquitination of ULK1 (By similarity). Interacts with CRBN; this interaction inhibits TLR4-mediated signaling by preventing TRAF6-mediated ubiquitination of ECSIT (By similarity).</text>
</comment>
<comment type="subunit">
    <text evidence="25">(Microbial infection) Interacts (via N-terminal RING domain) with Toxoplasma gondii GRA7; the interaction plays a role in GRA7-induced pro-inflammatory cytokine production in mouse macrophages.</text>
</comment>
<comment type="interaction">
    <interactant intactId="EBI-448028">
        <id>P70196</id>
    </interactant>
    <interactant intactId="EBI-525742">
        <id>P27512</id>
        <label>Cd40</label>
    </interactant>
    <organismsDiffer>false</organismsDiffer>
    <experiments>2</experiments>
</comment>
<comment type="interaction">
    <interactant intactId="EBI-448028">
        <id>P70196</id>
    </interactant>
    <interactant intactId="EBI-527020">
        <id>Q9QZH6</id>
        <label>Ecsit</label>
    </interactant>
    <organismsDiffer>false</organismsDiffer>
    <experiments>5</experiments>
</comment>
<comment type="interaction">
    <interactant intactId="EBI-448028">
        <id>P70196</id>
    </interactant>
    <interactant intactId="EBI-5480799">
        <id>Q9EQY0</id>
        <label>Ern1</label>
    </interactant>
    <organismsDiffer>false</organismsDiffer>
    <experiments>6</experiments>
</comment>
<comment type="interaction">
    <interactant intactId="EBI-448028">
        <id>P70196</id>
    </interactant>
    <interactant intactId="EBI-397360">
        <id>P17879</id>
        <label>Hspa1b</label>
    </interactant>
    <organismsDiffer>false</organismsDiffer>
    <experiments>3</experiments>
</comment>
<comment type="interaction">
    <interactant intactId="EBI-448028">
        <id>P70196</id>
    </interactant>
    <interactant intactId="EBI-488313">
        <id>Q62406-1</id>
        <label>Irak1</label>
    </interactant>
    <organismsDiffer>false</organismsDiffer>
    <experiments>4</experiments>
</comment>
<comment type="interaction">
    <interactant intactId="EBI-448028">
        <id>P70196</id>
    </interactant>
    <interactant intactId="EBI-646179">
        <id>Q8K4B2</id>
        <label>Irak3</label>
    </interactant>
    <organismsDiffer>false</organismsDiffer>
    <experiments>3</experiments>
</comment>
<comment type="interaction">
    <interactant intactId="EBI-448028">
        <id>P70196</id>
    </interactant>
    <interactant intactId="EBI-446250">
        <id>Q61084</id>
        <label>Map3k3</label>
    </interactant>
    <organismsDiffer>false</organismsDiffer>
    <experiments>5</experiments>
</comment>
<comment type="interaction">
    <interactant intactId="EBI-448028">
        <id>P70196</id>
    </interactant>
    <interactant intactId="EBI-525108">
        <id>P22366</id>
        <label>Myd88</label>
    </interactant>
    <organismsDiffer>false</organismsDiffer>
    <experiments>4</experiments>
</comment>
<comment type="interaction">
    <interactant intactId="EBI-448028">
        <id>P70196</id>
    </interactant>
    <interactant intactId="EBI-4310440">
        <id>Q62227</id>
        <label>Nr0b2</label>
    </interactant>
    <organismsDiffer>false</organismsDiffer>
    <experiments>5</experiments>
</comment>
<comment type="interaction">
    <interactant intactId="EBI-448028">
        <id>P70196</id>
    </interactant>
    <interactant intactId="EBI-397236">
        <id>P35235</id>
        <label>Ptpn11</label>
    </interactant>
    <organismsDiffer>false</organismsDiffer>
    <experiments>2</experiments>
</comment>
<comment type="interaction">
    <interactant intactId="EBI-448028">
        <id>P70196</id>
    </interactant>
    <interactant intactId="EBI-524817">
        <id>Q793I8</id>
        <label>Tifa</label>
    </interactant>
    <organismsDiffer>false</organismsDiffer>
    <experiments>2</experiments>
</comment>
<comment type="interaction">
    <interactant intactId="EBI-448028">
        <id>P70196</id>
    </interactant>
    <interactant intactId="EBI-647362">
        <id>O35305</id>
        <label>Tnfrsf11a</label>
    </interactant>
    <organismsDiffer>false</organismsDiffer>
    <experiments>2</experiments>
</comment>
<comment type="interaction">
    <interactant intactId="EBI-448028">
        <id>P70196</id>
    </interactant>
    <interactant intactId="EBI-530713">
        <id>Q8C0E5</id>
        <label>Traf3ip2</label>
    </interactant>
    <organismsDiffer>false</organismsDiffer>
    <experiments>3</experiments>
</comment>
<comment type="interaction">
    <interactant intactId="EBI-448028">
        <id>P70196</id>
    </interactant>
    <interactant intactId="EBI-646165">
        <id>Q8N7N6</id>
        <label>Traf3ip2</label>
    </interactant>
    <organismsDiffer>false</organismsDiffer>
    <experiments>4</experiments>
</comment>
<comment type="interaction">
    <interactant intactId="EBI-448028">
        <id>P70196</id>
    </interactant>
    <interactant intactId="EBI-1396948">
        <id>Q3UDK1</id>
        <label>Trafd1</label>
    </interactant>
    <organismsDiffer>false</organismsDiffer>
    <experiments>2</experiments>
</comment>
<comment type="interaction">
    <interactant intactId="EBI-448028">
        <id>P70196</id>
    </interactant>
    <interactant intactId="EBI-413074">
        <id>P62991</id>
        <label>Ubc</label>
    </interactant>
    <organismsDiffer>false</organismsDiffer>
    <experiments>5</experiments>
</comment>
<comment type="interaction">
    <interactant intactId="EBI-448028">
        <id>P70196</id>
    </interactant>
    <interactant intactId="EBI-740711">
        <id>Q96CG3</id>
        <label>TIFA</label>
    </interactant>
    <organismsDiffer>true</organismsDiffer>
    <experiments>4</experiments>
</comment>
<comment type="subcellular location">
    <subcellularLocation>
        <location evidence="2">Cytoplasm</location>
    </subcellularLocation>
    <subcellularLocation>
        <location evidence="2">Cytoplasm</location>
        <location evidence="2">Cell cortex</location>
    </subcellularLocation>
    <subcellularLocation>
        <location evidence="2">Nucleus</location>
    </subcellularLocation>
    <subcellularLocation>
        <location evidence="21">Lipid droplet</location>
    </subcellularLocation>
    <text>RSAD2/viperin recruits it to the lipid droplet.</text>
</comment>
<comment type="alternative products">
    <event type="alternative splicing"/>
    <isoform>
        <id>P70196-1</id>
        <name>1</name>
        <sequence type="displayed"/>
    </isoform>
    <isoform>
        <id>P70196-2</id>
        <name>2</name>
        <sequence type="described" ref="VSP_007404 VSP_007405"/>
    </isoform>
</comment>
<comment type="tissue specificity">
    <text>Highly expressed in brain, lung, liver, skeletal muscle, and kidney; lower expression in heart, spleen, and testis.</text>
</comment>
<comment type="domain">
    <text>The coiled coil domain mediates homo- and hetero-oligomerization.</text>
</comment>
<comment type="domain">
    <text>The MATH/TRAF domain binds to receptor cytoplasmic domains.</text>
</comment>
<comment type="PTM">
    <text evidence="2">Sumoylated on Lys-124, Lys-142 and Lys-461 with SUMO1.</text>
</comment>
<comment type="PTM">
    <text evidence="2 23 24">Polyubiquitinated on Lys-124 by TRAF3IP2; after cell stimulation with IL17A (By similarity). Polyubiquitinated; after cell stimulation with IL1B or TGFB. This ligand-induced cell stimulation leads to dimerization/oligomerization of TRAF6 molecules, followed by auto-ubiquitination which involves UBE2N and UBE2V1 and leads to TRAF6 activation. This 'Lys-63' site-specific poly-ubiquitination appears to be associated with the activation of signaling molecules. Endogenous autoubiquitination occurs only for the cytoplasmic form. Deubiquitinated by USP10 in a TANK-dependent manner, leading to the negative regulation of NF-kappa-B signaling upon DNA damage. LRRC19 induces 'Lys-63' ubiquitination (PubMed:25026888). Ubiquitinated at Lys-327 by the SCF(FBXL2) complex, leading to its degradation by the proteasome (PubMed:23542741).</text>
</comment>
<comment type="disruption phenotype">
    <text evidence="7 8 12 14 15 16 19">Abrogation of IL-1-induced activation of NF-kappa-B, MAPK8/JNK and MAPK14/p38. Animals appear normal at birth but become smaller after one week. Show runting, failure of tooth eruption and die after three weeks. Exhibit severe osteopetrosis, thymic atrophy, lymph node deficiency, splenomegaly, and have alopecia and lack sweat glands.</text>
</comment>
<comment type="similarity">
    <text evidence="28">Belongs to the TNF receptor-associated factor family. A subfamily.</text>
</comment>
<name>TRAF6_MOUSE</name>
<organism>
    <name type="scientific">Mus musculus</name>
    <name type="common">Mouse</name>
    <dbReference type="NCBI Taxonomy" id="10090"/>
    <lineage>
        <taxon>Eukaryota</taxon>
        <taxon>Metazoa</taxon>
        <taxon>Chordata</taxon>
        <taxon>Craniata</taxon>
        <taxon>Vertebrata</taxon>
        <taxon>Euteleostomi</taxon>
        <taxon>Mammalia</taxon>
        <taxon>Eutheria</taxon>
        <taxon>Euarchontoglires</taxon>
        <taxon>Glires</taxon>
        <taxon>Rodentia</taxon>
        <taxon>Myomorpha</taxon>
        <taxon>Muroidea</taxon>
        <taxon>Muridae</taxon>
        <taxon>Murinae</taxon>
        <taxon>Mus</taxon>
        <taxon>Mus</taxon>
    </lineage>
</organism>
<evidence type="ECO:0000250" key="1"/>
<evidence type="ECO:0000250" key="2">
    <source>
        <dbReference type="UniProtKB" id="Q9Y4K3"/>
    </source>
</evidence>
<evidence type="ECO:0000255" key="3"/>
<evidence type="ECO:0000255" key="4">
    <source>
        <dbReference type="PROSITE-ProRule" id="PRU00129"/>
    </source>
</evidence>
<evidence type="ECO:0000255" key="5">
    <source>
        <dbReference type="PROSITE-ProRule" id="PRU00175"/>
    </source>
</evidence>
<evidence type="ECO:0000255" key="6">
    <source>
        <dbReference type="PROSITE-ProRule" id="PRU00207"/>
    </source>
</evidence>
<evidence type="ECO:0000269" key="7">
    <source>
    </source>
</evidence>
<evidence type="ECO:0000269" key="8">
    <source>
    </source>
</evidence>
<evidence type="ECO:0000269" key="9">
    <source>
    </source>
</evidence>
<evidence type="ECO:0000269" key="10">
    <source>
    </source>
</evidence>
<evidence type="ECO:0000269" key="11">
    <source>
    </source>
</evidence>
<evidence type="ECO:0000269" key="12">
    <source>
    </source>
</evidence>
<evidence type="ECO:0000269" key="13">
    <source>
    </source>
</evidence>
<evidence type="ECO:0000269" key="14">
    <source>
    </source>
</evidence>
<evidence type="ECO:0000269" key="15">
    <source>
    </source>
</evidence>
<evidence type="ECO:0000269" key="16">
    <source>
    </source>
</evidence>
<evidence type="ECO:0000269" key="17">
    <source>
    </source>
</evidence>
<evidence type="ECO:0000269" key="18">
    <source>
    </source>
</evidence>
<evidence type="ECO:0000269" key="19">
    <source>
    </source>
</evidence>
<evidence type="ECO:0000269" key="20">
    <source>
    </source>
</evidence>
<evidence type="ECO:0000269" key="21">
    <source>
    </source>
</evidence>
<evidence type="ECO:0000269" key="22">
    <source>
    </source>
</evidence>
<evidence type="ECO:0000269" key="23">
    <source>
    </source>
</evidence>
<evidence type="ECO:0000269" key="24">
    <source>
    </source>
</evidence>
<evidence type="ECO:0000269" key="25">
    <source>
    </source>
</evidence>
<evidence type="ECO:0000269" key="26">
    <source>
    </source>
</evidence>
<evidence type="ECO:0000303" key="27">
    <source>
    </source>
</evidence>
<evidence type="ECO:0000305" key="28"/>